<protein>
    <recommendedName>
        <fullName evidence="1">UvrABC system protein B</fullName>
        <shortName evidence="1">Protein UvrB</shortName>
    </recommendedName>
    <alternativeName>
        <fullName evidence="1">Excinuclease ABC subunit B</fullName>
    </alternativeName>
</protein>
<name>UVRB_NEIMA</name>
<comment type="function">
    <text evidence="1">The UvrABC repair system catalyzes the recognition and processing of DNA lesions. A damage recognition complex composed of 2 UvrA and 2 UvrB subunits scans DNA for abnormalities. Upon binding of the UvrA(2)B(2) complex to a putative damaged site, the DNA wraps around one UvrB monomer. DNA wrap is dependent on ATP binding by UvrB and probably causes local melting of the DNA helix, facilitating insertion of UvrB beta-hairpin between the DNA strands. Then UvrB probes one DNA strand for the presence of a lesion. If a lesion is found the UvrA subunits dissociate and the UvrB-DNA preincision complex is formed. This complex is subsequently bound by UvrC and the second UvrB is released. If no lesion is found, the DNA wraps around the other UvrB subunit that will check the other stand for damage.</text>
</comment>
<comment type="subunit">
    <text evidence="1">Forms a heterotetramer with UvrA during the search for lesions. Interacts with UvrC in an incision complex.</text>
</comment>
<comment type="subcellular location">
    <subcellularLocation>
        <location evidence="1">Cytoplasm</location>
    </subcellularLocation>
</comment>
<comment type="domain">
    <text evidence="1">The beta-hairpin motif is involved in DNA binding.</text>
</comment>
<comment type="similarity">
    <text evidence="1">Belongs to the UvrB family.</text>
</comment>
<sequence>MEVIRYPDSPFKLHQPFPPAGDQPTAIAGLLEGLSDGLAYQTLLGVTGSGKTYTMANVIAQSGRPAIIMAHNKTLAAQLYAEMREFFPENAVEYFVSYYDYYQPEAYVPSRDLFIEKDSAINEHIEQMRLSATKNLMTRDDVIIVATVSAIYGIGDPTEYQQMVLSVKEGDTIEQRDIIATLVSMQYERGDLDFKRGSFRVRGDVIDVYPAESSENALRISLFDDEIDRLDMFDPLSGSLHQRVGRYTVFPSSHYVTPRDTVLRACDSIKEELRERIDFFTKENRPVEQQRIEQRTRFDLEMLYEMGFCKGIENYSRHFSGKKEGEPPPTLMDYLPSNAIMFIDESHVTVTQIGGMYKGDASRKQNLVDYGFRLPSARDNRPLKFHEFEKVMPQTVFVSATPAKYEEEHAGQVVEQVVRPTGLVDPQIIIRPVATQVDDLMSEINDRIQKGERVLVTTLTKRMAEQLTDYYSELGIKVRYLHSDIDTVERVEIIRDLRLGLFDVLVGINLLREGLDIPEVSLVAILDADKEGFLRSHRSLIQTIGRAARNVNGVAILYADKITDSMKAAIDETERRREKQIKFNEEHGIVPQQIKKQVKDIIDGVYHEEDSGKGRRQGKNKVKVGEIHNEEDAIKEIAKLEKAMQQAARDLQFEEAAVLRDRIRNIKENLLFGAE</sequence>
<gene>
    <name evidence="1" type="primary">uvrB</name>
    <name type="ordered locus">NMA1545</name>
</gene>
<keyword id="KW-0067">ATP-binding</keyword>
<keyword id="KW-0963">Cytoplasm</keyword>
<keyword id="KW-0227">DNA damage</keyword>
<keyword id="KW-0228">DNA excision</keyword>
<keyword id="KW-0234">DNA repair</keyword>
<keyword id="KW-0267">Excision nuclease</keyword>
<keyword id="KW-0547">Nucleotide-binding</keyword>
<keyword id="KW-0742">SOS response</keyword>
<evidence type="ECO:0000255" key="1">
    <source>
        <dbReference type="HAMAP-Rule" id="MF_00204"/>
    </source>
</evidence>
<feature type="chain" id="PRO_0000138415" description="UvrABC system protein B">
    <location>
        <begin position="1"/>
        <end position="675"/>
    </location>
</feature>
<feature type="domain" description="Helicase ATP-binding" evidence="1">
    <location>
        <begin position="32"/>
        <end position="417"/>
    </location>
</feature>
<feature type="domain" description="Helicase C-terminal" evidence="1">
    <location>
        <begin position="436"/>
        <end position="602"/>
    </location>
</feature>
<feature type="domain" description="UVR" evidence="1">
    <location>
        <begin position="634"/>
        <end position="669"/>
    </location>
</feature>
<feature type="short sequence motif" description="Beta-hairpin">
    <location>
        <begin position="98"/>
        <end position="121"/>
    </location>
</feature>
<feature type="binding site" evidence="1">
    <location>
        <begin position="45"/>
        <end position="52"/>
    </location>
    <ligand>
        <name>ATP</name>
        <dbReference type="ChEBI" id="CHEBI:30616"/>
    </ligand>
</feature>
<accession>P56996</accession>
<accession>A1ISD5</accession>
<proteinExistence type="inferred from homology"/>
<reference key="1">
    <citation type="journal article" date="2000" name="Nature">
        <title>Complete DNA sequence of a serogroup A strain of Neisseria meningitidis Z2491.</title>
        <authorList>
            <person name="Parkhill J."/>
            <person name="Achtman M."/>
            <person name="James K.D."/>
            <person name="Bentley S.D."/>
            <person name="Churcher C.M."/>
            <person name="Klee S.R."/>
            <person name="Morelli G."/>
            <person name="Basham D."/>
            <person name="Brown D."/>
            <person name="Chillingworth T."/>
            <person name="Davies R.M."/>
            <person name="Davis P."/>
            <person name="Devlin K."/>
            <person name="Feltwell T."/>
            <person name="Hamlin N."/>
            <person name="Holroyd S."/>
            <person name="Jagels K."/>
            <person name="Leather S."/>
            <person name="Moule S."/>
            <person name="Mungall K.L."/>
            <person name="Quail M.A."/>
            <person name="Rajandream M.A."/>
            <person name="Rutherford K.M."/>
            <person name="Simmonds M."/>
            <person name="Skelton J."/>
            <person name="Whitehead S."/>
            <person name="Spratt B.G."/>
            <person name="Barrell B.G."/>
        </authorList>
    </citation>
    <scope>NUCLEOTIDE SEQUENCE [LARGE SCALE GENOMIC DNA]</scope>
    <source>
        <strain>DSM 15465 / Z2491</strain>
    </source>
</reference>
<dbReference type="EMBL" id="AL157959">
    <property type="protein sequence ID" value="CAM08691.1"/>
    <property type="molecule type" value="Genomic_DNA"/>
</dbReference>
<dbReference type="PIR" id="D81846">
    <property type="entry name" value="D81846"/>
</dbReference>
<dbReference type="RefSeq" id="WP_002245989.1">
    <property type="nucleotide sequence ID" value="NC_003116.1"/>
</dbReference>
<dbReference type="SMR" id="P56996"/>
<dbReference type="EnsemblBacteria" id="CAM08691">
    <property type="protein sequence ID" value="CAM08691"/>
    <property type="gene ID" value="NMA1545"/>
</dbReference>
<dbReference type="GeneID" id="93385869"/>
<dbReference type="KEGG" id="nma:NMA1545"/>
<dbReference type="HOGENOM" id="CLU_009621_2_1_4"/>
<dbReference type="Proteomes" id="UP000000626">
    <property type="component" value="Chromosome"/>
</dbReference>
<dbReference type="GO" id="GO:0005737">
    <property type="term" value="C:cytoplasm"/>
    <property type="evidence" value="ECO:0007669"/>
    <property type="project" value="UniProtKB-SubCell"/>
</dbReference>
<dbReference type="GO" id="GO:0009380">
    <property type="term" value="C:excinuclease repair complex"/>
    <property type="evidence" value="ECO:0007669"/>
    <property type="project" value="InterPro"/>
</dbReference>
<dbReference type="GO" id="GO:0005524">
    <property type="term" value="F:ATP binding"/>
    <property type="evidence" value="ECO:0007669"/>
    <property type="project" value="UniProtKB-UniRule"/>
</dbReference>
<dbReference type="GO" id="GO:0016887">
    <property type="term" value="F:ATP hydrolysis activity"/>
    <property type="evidence" value="ECO:0007669"/>
    <property type="project" value="InterPro"/>
</dbReference>
<dbReference type="GO" id="GO:0003677">
    <property type="term" value="F:DNA binding"/>
    <property type="evidence" value="ECO:0007669"/>
    <property type="project" value="UniProtKB-UniRule"/>
</dbReference>
<dbReference type="GO" id="GO:0009381">
    <property type="term" value="F:excinuclease ABC activity"/>
    <property type="evidence" value="ECO:0007669"/>
    <property type="project" value="UniProtKB-UniRule"/>
</dbReference>
<dbReference type="GO" id="GO:0006289">
    <property type="term" value="P:nucleotide-excision repair"/>
    <property type="evidence" value="ECO:0007669"/>
    <property type="project" value="UniProtKB-UniRule"/>
</dbReference>
<dbReference type="GO" id="GO:0009432">
    <property type="term" value="P:SOS response"/>
    <property type="evidence" value="ECO:0007669"/>
    <property type="project" value="UniProtKB-UniRule"/>
</dbReference>
<dbReference type="CDD" id="cd17916">
    <property type="entry name" value="DEXHc_UvrB"/>
    <property type="match status" value="1"/>
</dbReference>
<dbReference type="CDD" id="cd18790">
    <property type="entry name" value="SF2_C_UvrB"/>
    <property type="match status" value="1"/>
</dbReference>
<dbReference type="Gene3D" id="6.10.140.240">
    <property type="match status" value="1"/>
</dbReference>
<dbReference type="Gene3D" id="3.40.50.300">
    <property type="entry name" value="P-loop containing nucleotide triphosphate hydrolases"/>
    <property type="match status" value="3"/>
</dbReference>
<dbReference type="Gene3D" id="4.10.860.10">
    <property type="entry name" value="UVR domain"/>
    <property type="match status" value="1"/>
</dbReference>
<dbReference type="HAMAP" id="MF_00204">
    <property type="entry name" value="UvrB"/>
    <property type="match status" value="1"/>
</dbReference>
<dbReference type="InterPro" id="IPR006935">
    <property type="entry name" value="Helicase/UvrB_N"/>
</dbReference>
<dbReference type="InterPro" id="IPR014001">
    <property type="entry name" value="Helicase_ATP-bd"/>
</dbReference>
<dbReference type="InterPro" id="IPR001650">
    <property type="entry name" value="Helicase_C-like"/>
</dbReference>
<dbReference type="InterPro" id="IPR027417">
    <property type="entry name" value="P-loop_NTPase"/>
</dbReference>
<dbReference type="InterPro" id="IPR001943">
    <property type="entry name" value="UVR_dom"/>
</dbReference>
<dbReference type="InterPro" id="IPR036876">
    <property type="entry name" value="UVR_dom_sf"/>
</dbReference>
<dbReference type="InterPro" id="IPR004807">
    <property type="entry name" value="UvrB"/>
</dbReference>
<dbReference type="InterPro" id="IPR041471">
    <property type="entry name" value="UvrB_inter"/>
</dbReference>
<dbReference type="InterPro" id="IPR024759">
    <property type="entry name" value="UvrB_YAD/RRR_dom"/>
</dbReference>
<dbReference type="NCBIfam" id="NF003673">
    <property type="entry name" value="PRK05298.1"/>
    <property type="match status" value="1"/>
</dbReference>
<dbReference type="NCBIfam" id="TIGR00631">
    <property type="entry name" value="uvrb"/>
    <property type="match status" value="1"/>
</dbReference>
<dbReference type="PANTHER" id="PTHR24029">
    <property type="entry name" value="UVRABC SYSTEM PROTEIN B"/>
    <property type="match status" value="1"/>
</dbReference>
<dbReference type="PANTHER" id="PTHR24029:SF0">
    <property type="entry name" value="UVRABC SYSTEM PROTEIN B"/>
    <property type="match status" value="1"/>
</dbReference>
<dbReference type="Pfam" id="PF00271">
    <property type="entry name" value="Helicase_C"/>
    <property type="match status" value="1"/>
</dbReference>
<dbReference type="Pfam" id="PF04851">
    <property type="entry name" value="ResIII"/>
    <property type="match status" value="1"/>
</dbReference>
<dbReference type="Pfam" id="PF02151">
    <property type="entry name" value="UVR"/>
    <property type="match status" value="1"/>
</dbReference>
<dbReference type="Pfam" id="PF12344">
    <property type="entry name" value="UvrB"/>
    <property type="match status" value="1"/>
</dbReference>
<dbReference type="Pfam" id="PF17757">
    <property type="entry name" value="UvrB_inter"/>
    <property type="match status" value="1"/>
</dbReference>
<dbReference type="SMART" id="SM00487">
    <property type="entry name" value="DEXDc"/>
    <property type="match status" value="1"/>
</dbReference>
<dbReference type="SMART" id="SM00490">
    <property type="entry name" value="HELICc"/>
    <property type="match status" value="1"/>
</dbReference>
<dbReference type="SUPFAM" id="SSF46600">
    <property type="entry name" value="C-terminal UvrC-binding domain of UvrB"/>
    <property type="match status" value="1"/>
</dbReference>
<dbReference type="SUPFAM" id="SSF52540">
    <property type="entry name" value="P-loop containing nucleoside triphosphate hydrolases"/>
    <property type="match status" value="2"/>
</dbReference>
<dbReference type="PROSITE" id="PS51192">
    <property type="entry name" value="HELICASE_ATP_BIND_1"/>
    <property type="match status" value="1"/>
</dbReference>
<dbReference type="PROSITE" id="PS51194">
    <property type="entry name" value="HELICASE_CTER"/>
    <property type="match status" value="1"/>
</dbReference>
<dbReference type="PROSITE" id="PS50151">
    <property type="entry name" value="UVR"/>
    <property type="match status" value="1"/>
</dbReference>
<organism>
    <name type="scientific">Neisseria meningitidis serogroup A / serotype 4A (strain DSM 15465 / Z2491)</name>
    <dbReference type="NCBI Taxonomy" id="122587"/>
    <lineage>
        <taxon>Bacteria</taxon>
        <taxon>Pseudomonadati</taxon>
        <taxon>Pseudomonadota</taxon>
        <taxon>Betaproteobacteria</taxon>
        <taxon>Neisseriales</taxon>
        <taxon>Neisseriaceae</taxon>
        <taxon>Neisseria</taxon>
    </lineage>
</organism>